<name>K1C14_HUMAN</name>
<keyword id="KW-0002">3D-structure</keyword>
<keyword id="KW-0175">Coiled coil</keyword>
<keyword id="KW-0963">Cytoplasm</keyword>
<keyword id="KW-0225">Disease variant</keyword>
<keyword id="KW-1015">Disulfide bond</keyword>
<keyword id="KW-0038">Ectodermal dysplasia</keyword>
<keyword id="KW-0263">Epidermolysis bullosa</keyword>
<keyword id="KW-0403">Intermediate filament</keyword>
<keyword id="KW-0416">Keratin</keyword>
<keyword id="KW-0539">Nucleus</keyword>
<keyword id="KW-1007">Palmoplantar keratoderma</keyword>
<keyword id="KW-0597">Phosphoprotein</keyword>
<keyword id="KW-1267">Proteomics identification</keyword>
<keyword id="KW-1185">Reference proteome</keyword>
<keyword id="KW-0832">Ubl conjugation</keyword>
<reference key="1">
    <citation type="journal article" date="1984" name="Cell">
        <title>Remarkable conservation of structure among intermediate filament genes.</title>
        <authorList>
            <person name="Marchuk D."/>
            <person name="McCrohon S."/>
            <person name="Fuchs E."/>
        </authorList>
    </citation>
    <scope>NUCLEOTIDE SEQUENCE [GENOMIC DNA]</scope>
</reference>
<reference key="2">
    <citation type="journal article" date="1985" name="Proc. Natl. Acad. Sci. U.S.A.">
        <title>Complete sequence of a gene encoding a human type I keratin: sequences homologous to enhancer elements in the regulatory region of the gene.</title>
        <authorList>
            <person name="Marchuk D."/>
            <person name="McCrohon S."/>
            <person name="Fuchs E."/>
        </authorList>
    </citation>
    <scope>NUCLEOTIDE SEQUENCE [GENOMIC DNA]</scope>
    <scope>VARIANT TYR-63</scope>
</reference>
<reference key="3">
    <citation type="submission" date="2003-05" db="EMBL/GenBank/DDBJ databases">
        <title>Cloning of human full-length CDSs in BD Creator(TM) system donor vector.</title>
        <authorList>
            <person name="Kalnine N."/>
            <person name="Chen X."/>
            <person name="Rolfs A."/>
            <person name="Halleck A."/>
            <person name="Hines L."/>
            <person name="Eisenstein S."/>
            <person name="Koundinya M."/>
            <person name="Raphael J."/>
            <person name="Moreira D."/>
            <person name="Kelley T."/>
            <person name="LaBaer J."/>
            <person name="Lin Y."/>
            <person name="Phelan M."/>
            <person name="Farmer A."/>
        </authorList>
    </citation>
    <scope>NUCLEOTIDE SEQUENCE [LARGE SCALE MRNA]</scope>
    <scope>VARIANTS TYR-63 AND THR-94</scope>
</reference>
<reference key="4">
    <citation type="journal article" date="2006" name="Nature">
        <title>DNA sequence of human chromosome 17 and analysis of rearrangement in the human lineage.</title>
        <authorList>
            <person name="Zody M.C."/>
            <person name="Garber M."/>
            <person name="Adams D.J."/>
            <person name="Sharpe T."/>
            <person name="Harrow J."/>
            <person name="Lupski J.R."/>
            <person name="Nicholson C."/>
            <person name="Searle S.M."/>
            <person name="Wilming L."/>
            <person name="Young S.K."/>
            <person name="Abouelleil A."/>
            <person name="Allen N.R."/>
            <person name="Bi W."/>
            <person name="Bloom T."/>
            <person name="Borowsky M.L."/>
            <person name="Bugalter B.E."/>
            <person name="Butler J."/>
            <person name="Chang J.L."/>
            <person name="Chen C.-K."/>
            <person name="Cook A."/>
            <person name="Corum B."/>
            <person name="Cuomo C.A."/>
            <person name="de Jong P.J."/>
            <person name="DeCaprio D."/>
            <person name="Dewar K."/>
            <person name="FitzGerald M."/>
            <person name="Gilbert J."/>
            <person name="Gibson R."/>
            <person name="Gnerre S."/>
            <person name="Goldstein S."/>
            <person name="Grafham D.V."/>
            <person name="Grocock R."/>
            <person name="Hafez N."/>
            <person name="Hagopian D.S."/>
            <person name="Hart E."/>
            <person name="Norman C.H."/>
            <person name="Humphray S."/>
            <person name="Jaffe D.B."/>
            <person name="Jones M."/>
            <person name="Kamal M."/>
            <person name="Khodiyar V.K."/>
            <person name="LaButti K."/>
            <person name="Laird G."/>
            <person name="Lehoczky J."/>
            <person name="Liu X."/>
            <person name="Lokyitsang T."/>
            <person name="Loveland J."/>
            <person name="Lui A."/>
            <person name="Macdonald P."/>
            <person name="Major J.E."/>
            <person name="Matthews L."/>
            <person name="Mauceli E."/>
            <person name="McCarroll S.A."/>
            <person name="Mihalev A.H."/>
            <person name="Mudge J."/>
            <person name="Nguyen C."/>
            <person name="Nicol R."/>
            <person name="O'Leary S.B."/>
            <person name="Osoegawa K."/>
            <person name="Schwartz D.C."/>
            <person name="Shaw-Smith C."/>
            <person name="Stankiewicz P."/>
            <person name="Steward C."/>
            <person name="Swarbreck D."/>
            <person name="Venkataraman V."/>
            <person name="Whittaker C.A."/>
            <person name="Yang X."/>
            <person name="Zimmer A.R."/>
            <person name="Bradley A."/>
            <person name="Hubbard T."/>
            <person name="Birren B.W."/>
            <person name="Rogers J."/>
            <person name="Lander E.S."/>
            <person name="Nusbaum C."/>
        </authorList>
    </citation>
    <scope>NUCLEOTIDE SEQUENCE [LARGE SCALE GENOMIC DNA]</scope>
</reference>
<reference key="5">
    <citation type="journal article" date="2004" name="Genome Res.">
        <title>The status, quality, and expansion of the NIH full-length cDNA project: the Mammalian Gene Collection (MGC).</title>
        <authorList>
            <consortium name="The MGC Project Team"/>
        </authorList>
    </citation>
    <scope>NUCLEOTIDE SEQUENCE [LARGE SCALE MRNA]</scope>
    <scope>VARIANTS TYR-63 AND THR-94</scope>
    <source>
        <tissue>Brain</tissue>
        <tissue>Pancreas</tissue>
        <tissue>Skin</tissue>
    </source>
</reference>
<reference key="6">
    <citation type="journal article" date="1982" name="Cell">
        <title>The cDNA sequence of a human epidermal keratin: divergence of sequence but conservation of structure among intermediate filament proteins.</title>
        <authorList>
            <person name="Hanukoglu I."/>
            <person name="Fuchs E."/>
        </authorList>
    </citation>
    <scope>NUCLEOTIDE SEQUENCE [MRNA] OF 64-472</scope>
    <source>
        <tissue>Epidermis</tissue>
    </source>
</reference>
<reference key="7">
    <citation type="journal article" date="1996" name="J. Invest. Dermatol.">
        <title>Genetic analysis of a severe case of Dowling-Meara epidermolysis bullosa simplex.</title>
        <authorList>
            <person name="Chan Y.-M."/>
            <person name="Cheng J."/>
            <person name="Gedde-Dahl T. Jr."/>
            <person name="Niemi K.M."/>
            <person name="Fuchs E."/>
        </authorList>
    </citation>
    <scope>NUCLEOTIDE SEQUENCE [GENOMIC DNA] OF 117-132</scope>
    <scope>VARIANT EBS1A ASP-129</scope>
</reference>
<reference key="8">
    <citation type="journal article" date="1991" name="Cell">
        <title>Point mutations in human keratin 14 genes of epidermolysis bullosa simplex patients: genetic and functional analyses.</title>
        <authorList>
            <person name="Coulombe P.A."/>
            <person name="Hutton M.E."/>
            <person name="Letai A."/>
            <person name="Hebert A."/>
            <person name="Paller A.S."/>
            <person name="Fuchs E."/>
        </authorList>
    </citation>
    <scope>NUCLEOTIDE SEQUENCE [GENOMIC DNA] OF 118-126</scope>
    <scope>VARIANTS EBS1A PHE-122; CYS-125 AND HIS-125</scope>
</reference>
<reference key="9">
    <citation type="journal article" date="1994" name="Hum. Mol. Genet.">
        <title>A novel mutation of Leu122 to Phe at a highly conserved hydrophobic residue in the helix initiation motif of keratin 14 in epidermolysis bullosa simplex.</title>
        <authorList>
            <person name="Yamanishi K."/>
            <person name="Matsuki M."/>
            <person name="Konishi K."/>
            <person name="Yasuno H."/>
        </authorList>
    </citation>
    <scope>NUCLEOTIDE SEQUENCE [GENOMIC DNA] OF 118-126</scope>
    <scope>VARIANT EBS1B PHE-122</scope>
</reference>
<reference key="10">
    <citation type="submission" date="1999-09" db="EMBL/GenBank/DDBJ databases">
        <title>A novel mutation of cytokeratin 14 in a Japanese epidermolysis bullosa simplex family.</title>
        <authorList>
            <person name="Fujiwara H."/>
        </authorList>
    </citation>
    <scope>NUCLEOTIDE SEQUENCE [GENOMIC DNA] OF 352-424</scope>
    <scope>VARIANT EBS1B THR-413</scope>
</reference>
<reference key="11">
    <citation type="journal article" date="1998" name="J. Invest. Dermatol.">
        <title>Characterization and chromosomal localization of human hair-specific keratin genes and comparative expression during the hair growth cycle.</title>
        <authorList>
            <person name="Bowden P.E."/>
            <person name="Hainey S.D."/>
            <person name="Parker G."/>
            <person name="Jones D.O."/>
            <person name="Zimonjic D."/>
            <person name="Popescu N."/>
            <person name="Hodgins M.B."/>
        </authorList>
    </citation>
    <scope>TISSUE SPECIFICITY</scope>
</reference>
<reference key="12">
    <citation type="journal article" date="2000" name="J. Cell Sci.">
        <title>Interaction of plakophilins with desmoplakin and intermediate filament proteins: an in vitro analysis.</title>
        <authorList>
            <person name="Hofmann I."/>
            <person name="Mertens C."/>
            <person name="Brettel M."/>
            <person name="Nimmrich V."/>
            <person name="Schnoelzer M."/>
            <person name="Herrmann H."/>
        </authorList>
    </citation>
    <scope>INTERACTION WITH PKP1 AND PKP2</scope>
</reference>
<reference key="13">
    <citation type="journal article" date="2001" name="J. Cell Biol.">
        <title>Keratin attenuates tumor necrosis factor-induced cytotoxicity through association with TRADD.</title>
        <authorList>
            <person name="Inada H."/>
            <person name="Izawa I."/>
            <person name="Nishizawa M."/>
            <person name="Fujita E."/>
            <person name="Kiyono T."/>
            <person name="Takahashi T."/>
            <person name="Momoi T."/>
            <person name="Inagaki M."/>
        </authorList>
    </citation>
    <scope>INTERACTION WITH TRADD</scope>
</reference>
<reference key="14">
    <citation type="journal article" date="2001" name="J. Cell Biol.">
        <title>The nonhelical tail domain of keratin 14 promotes filament bundling and enhances the mechanical properties of keratin intermediate filaments in vitro.</title>
        <authorList>
            <person name="Bousquet O."/>
            <person name="Ma L."/>
            <person name="Yamada S."/>
            <person name="Gu C."/>
            <person name="Idei T."/>
            <person name="Takahashi K."/>
            <person name="Wirtz D."/>
            <person name="Coulombe P.A."/>
        </authorList>
    </citation>
    <scope>FUNCTION</scope>
    <scope>INTERACTION WITH KERATIN FILAMENTS</scope>
    <scope>SUBCELLULAR LOCATION</scope>
</reference>
<reference key="15">
    <citation type="journal article" date="2003" name="Nature">
        <title>Proteomic characterization of the human centrosome by protein correlation profiling.</title>
        <authorList>
            <person name="Andersen J.S."/>
            <person name="Wilkinson C.J."/>
            <person name="Mayor T."/>
            <person name="Mortensen P."/>
            <person name="Nigg E.A."/>
            <person name="Mann M."/>
        </authorList>
    </citation>
    <scope>IDENTIFICATION BY MASS SPECTROMETRY</scope>
    <source>
        <tissue>Lymphoblast</tissue>
    </source>
</reference>
<reference key="16">
    <citation type="journal article" date="2008" name="Mol. Cell">
        <title>Kinase-selective enrichment enables quantitative phosphoproteomics of the kinome across the cell cycle.</title>
        <authorList>
            <person name="Daub H."/>
            <person name="Olsen J.V."/>
            <person name="Bairlein M."/>
            <person name="Gnad F."/>
            <person name="Oppermann F.S."/>
            <person name="Korner R."/>
            <person name="Greff Z."/>
            <person name="Keri G."/>
            <person name="Stemmann O."/>
            <person name="Mann M."/>
        </authorList>
    </citation>
    <scope>IDENTIFICATION BY MASS SPECTROMETRY [LARGE SCALE ANALYSIS]</scope>
    <source>
        <tissue>Cervix carcinoma</tissue>
    </source>
</reference>
<reference key="17">
    <citation type="journal article" date="2011" name="BMC Syst. Biol.">
        <title>Initial characterization of the human central proteome.</title>
        <authorList>
            <person name="Burkard T.R."/>
            <person name="Planyavsky M."/>
            <person name="Kaupe I."/>
            <person name="Breitwieser F.P."/>
            <person name="Buerckstuemmer T."/>
            <person name="Bennett K.L."/>
            <person name="Superti-Furga G."/>
            <person name="Colinge J."/>
        </authorList>
    </citation>
    <scope>IDENTIFICATION BY MASS SPECTROMETRY [LARGE SCALE ANALYSIS]</scope>
</reference>
<reference key="18">
    <citation type="journal article" date="2014" name="J. Invest. Dermatol.">
        <title>Interaction of plectin with keratins 5 and 14: dependence on several plectin domains and keratin quaternary structure.</title>
        <authorList>
            <person name="Bouameur J.E."/>
            <person name="Favre B."/>
            <person name="Fontao L."/>
            <person name="Lingasamy P."/>
            <person name="Begre N."/>
            <person name="Borradori L."/>
        </authorList>
    </citation>
    <scope>IDENTIFICATION IN A COMPLEX WITH KRT5</scope>
    <scope>INTERACTION WITH KRT5 AND PLEC</scope>
</reference>
<reference key="19">
    <citation type="journal article" date="2014" name="J. Proteomics">
        <title>An enzyme assisted RP-RPLC approach for in-depth analysis of human liver phosphoproteome.</title>
        <authorList>
            <person name="Bian Y."/>
            <person name="Song C."/>
            <person name="Cheng K."/>
            <person name="Dong M."/>
            <person name="Wang F."/>
            <person name="Huang J."/>
            <person name="Sun D."/>
            <person name="Wang L."/>
            <person name="Ye M."/>
            <person name="Zou H."/>
        </authorList>
    </citation>
    <scope>IDENTIFICATION BY MASS SPECTROMETRY [LARGE SCALE ANALYSIS]</scope>
    <source>
        <tissue>Liver</tissue>
    </source>
</reference>
<reference key="20">
    <citation type="journal article" date="2015" name="Proteomics">
        <title>N-terminome analysis of the human mitochondrial proteome.</title>
        <authorList>
            <person name="Vaca Jacome A.S."/>
            <person name="Rabilloud T."/>
            <person name="Schaeffer-Reiss C."/>
            <person name="Rompais M."/>
            <person name="Ayoub D."/>
            <person name="Lane L."/>
            <person name="Bairoch A."/>
            <person name="Van Dorsselaer A."/>
            <person name="Carapito C."/>
        </authorList>
    </citation>
    <scope>IDENTIFICATION BY MASS SPECTROMETRY [LARGE SCALE ANALYSIS]</scope>
</reference>
<reference key="21">
    <citation type="journal article" date="2016" name="Hum. Mol. Genet.">
        <title>Keratin 12 missense mutation induces the unfolded protein response and apoptosis in Meesmann epithelial corneal dystrophy.</title>
        <authorList>
            <person name="Allen E.H."/>
            <person name="Courtney D.G."/>
            <person name="Atkinson S.D."/>
            <person name="Moore J.E."/>
            <person name="Mairs L."/>
            <person name="Poulsen E.T."/>
            <person name="Schiroli D."/>
            <person name="Maurizi E."/>
            <person name="Cole C."/>
            <person name="Hickerson R.P."/>
            <person name="James J."/>
            <person name="Murgatroyd H."/>
            <person name="Smith F.J."/>
            <person name="MacEwen C."/>
            <person name="Enghild J.J."/>
            <person name="Nesbit M.A."/>
            <person name="Leslie Pedrioli D.M."/>
            <person name="McLean W.H."/>
            <person name="Moore C.B."/>
        </authorList>
    </citation>
    <scope>TISSUE SPECIFICITY</scope>
</reference>
<reference key="22">
    <citation type="journal article" date="2016" name="Nat. Genet.">
        <title>Stabilizing mutations of KLHL24 ubiquitin ligase cause loss of keratin 14 and human skin fragility.</title>
        <authorList>
            <person name="Lin Z."/>
            <person name="Li S."/>
            <person name="Feng C."/>
            <person name="Yang S."/>
            <person name="Wang H."/>
            <person name="Ma D."/>
            <person name="Zhang J."/>
            <person name="Gou M."/>
            <person name="Bu D."/>
            <person name="Zhang T."/>
            <person name="Kong X."/>
            <person name="Wang X."/>
            <person name="Sarig O."/>
            <person name="Ren Y."/>
            <person name="Dai L."/>
            <person name="Liu H."/>
            <person name="Zhang J."/>
            <person name="Li F."/>
            <person name="Hu Y."/>
            <person name="Padalon-Brauch G."/>
            <person name="Vodo D."/>
            <person name="Zhou F."/>
            <person name="Chen T."/>
            <person name="Deng H."/>
            <person name="Sprecher E."/>
            <person name="Yang Y."/>
            <person name="Tan X."/>
        </authorList>
    </citation>
    <scope>UBIQUITINATION BY THE BCR(KLHL24) COMPLEX</scope>
    <scope>INTERACTION WITH KLHL24</scope>
</reference>
<reference key="23">
    <citation type="journal article" date="2020" name="Sci. Rep.">
        <title>Serum lipids, retinoic acid and phenol red differentially regulate expression of keratins K1, K10 and K2 in cultured keratinocytes.</title>
        <authorList>
            <person name="Aldehlawi H."/>
            <person name="Usman S."/>
            <person name="Lalli A."/>
            <person name="Ahmad F."/>
            <person name="Williams G."/>
            <person name="Teh M.T."/>
            <person name="Waseem A."/>
        </authorList>
    </citation>
    <scope>SUBCELLULAR LOCATION</scope>
</reference>
<reference evidence="50" key="24">
    <citation type="journal article" date="2012" name="Nat. Struct. Mol. Biol.">
        <title>Structural basis for heteromeric assembly and perinuclear organization of keratin filaments.</title>
        <authorList>
            <person name="Lee C.H."/>
            <person name="Kim M.S."/>
            <person name="Chung B.M."/>
            <person name="Leahy D.J."/>
            <person name="Coulombe P.A."/>
        </authorList>
    </citation>
    <scope>X-RAY CRYSTALLOGRAPHY (3.0 ANGSTROMS) OF 295-422 IN COMPLEX WITH KRT5</scope>
    <scope>DISULFIDE BOND</scope>
    <scope>SUBCELLULAR LOCATION</scope>
</reference>
<reference evidence="51" key="25">
    <citation type="journal article" date="2020" name="Structure">
        <title>Structure-Function Analyses of a Keratin Heterotypic Complex Identify Specific Keratin Regions Involved in Intermediate Filament Assembly.</title>
        <authorList>
            <person name="Lee C.H."/>
            <person name="Kim M.S."/>
            <person name="Li S."/>
            <person name="Leahy D.J."/>
            <person name="Coulombe P.A."/>
        </authorList>
    </citation>
    <scope>X-RAY CRYSTALLOGRAPHY (2.60 ANGSTROMS) OF 327-421 OF MUTANT ALA-367 IN COMPLEX WITH KRT5</scope>
    <scope>SUBCELLULAR LOCATION</scope>
    <scope>MUTAGENESIS OF ARG-335; GLU-342; GLN-346; ARG-365; TYR-366 AND GLN-372</scope>
</reference>
<reference key="26">
    <citation type="journal article" date="1991" name="Science">
        <title>Epidermolysis bullosa simplex: evidence in two families for keratin gene abnormalities.</title>
        <authorList>
            <person name="Bonifas J.M."/>
            <person name="Rothman A.L."/>
            <person name="Epstein E.H. Jr."/>
        </authorList>
    </citation>
    <scope>VARIANT EBS1B PRO-384</scope>
</reference>
<reference key="27">
    <citation type="journal article" date="1993" name="Hum. Mol. Genet.">
        <title>A novel three-nucleotide deletion in the helix 2B region of keratin 14 in epidermolysis bullosa simplex: delta E375.</title>
        <authorList>
            <person name="Chen M.A."/>
            <person name="Bonifas J.M."/>
            <person name="Matsumura K."/>
            <person name="Blumenfeld A."/>
            <person name="Epstein E.H. Jr."/>
        </authorList>
    </citation>
    <scope>VARIANT EBS1C GLU-375 DEL</scope>
</reference>
<reference key="28">
    <citation type="journal article" date="1993" name="Hum. Mutat.">
        <title>A mutation (Met--&gt;Arg) in the type I keratin (K14) gene responsible for autosomal dominant epidermolysis bullosa simplex.</title>
        <authorList>
            <person name="Humphries M.M."/>
            <person name="Sheils D.M."/>
            <person name="Farrar G.J."/>
            <person name="Kumar-Singh R."/>
            <person name="Kenna P.F."/>
            <person name="Mansergh F.C."/>
            <person name="Jordan S.A."/>
            <person name="Young M.M."/>
            <person name="Humphries P."/>
        </authorList>
    </citation>
    <scope>VARIANT EBS1B ARG-272</scope>
</reference>
<reference key="29">
    <citation type="journal article" date="1993" name="J. Invest. Dermatol.">
        <title>A keratin 14 mutational hot spot for epidermolysis bullosa simplex, Dowling-Meara: implications for diagnosis.</title>
        <authorList>
            <person name="Stephens K."/>
            <person name="Sybert V.P."/>
            <person name="Wijsman E.M."/>
            <person name="Ehrlich P."/>
            <person name="Spencer A."/>
        </authorList>
    </citation>
    <scope>VARIANT EBS1A HIS-125</scope>
</reference>
<reference key="30">
    <citation type="journal article" date="1993" name="Nat. Genet.">
        <title>A missense mutation in the rod domain of keratin 14 associated with recessive epidermolysis bullosa simplex.</title>
        <authorList>
            <person name="Hovnanian A."/>
            <person name="Pollack E."/>
            <person name="Hilal L."/>
            <person name="Rochat A."/>
            <person name="Prost C."/>
            <person name="Barrandon Y."/>
            <person name="Goossens M."/>
        </authorList>
    </citation>
    <scope>VARIANT EBS1D ALA-144</scope>
</reference>
<reference key="31">
    <citation type="journal article" date="1993" name="Nat. Genet.">
        <title>Missing links: Weber-Cockayne keratin mutations implicate the L12 linker domain in effective cytoskeleton function.</title>
        <authorList>
            <person name="Rugg E.L."/>
            <person name="Morley S.M."/>
            <person name="Smith F.J.D."/>
            <person name="Boxer M."/>
            <person name="Tidman M.J."/>
            <person name="Navsaria H.A."/>
            <person name="Leigh I.M."/>
            <person name="Lane E.B."/>
        </authorList>
    </citation>
    <scope>VARIANT EBS1A MET-270</scope>
</reference>
<reference key="32">
    <citation type="journal article" date="1995" name="J. Invest. Dermatol.">
        <title>Keratin 14 gene mutations in patients with epidermolysis bullosa simplex.</title>
        <authorList>
            <person name="Chen H."/>
            <person name="Bonifas J.M."/>
            <person name="Matsumura K."/>
            <person name="Ikeda S."/>
            <person name="Leyden W.A."/>
            <person name="Epstein E.H. Jr."/>
        </authorList>
    </citation>
    <scope>VARIANTS EBS1C ILE-119; ASP-274; ASN-377 AND CYS-388</scope>
    <scope>VARIANTS EBS1A ARG-120; CYS-125 AND SER-125</scope>
</reference>
<reference key="33">
    <citation type="journal article" date="1997" name="J. Invest. Dermatol.">
        <title>Partial dominance of a keratin 14 mutation in epidermolysis bullosa simplex: increased severity of disease in a homozygote.</title>
        <authorList>
            <person name="Hu Z.L."/>
            <person name="Smith L."/>
            <person name="Martins S."/>
            <person name="Bonifas J.M."/>
            <person name="Chen H."/>
            <person name="Epstein E.H. Jr."/>
        </authorList>
    </citation>
    <scope>VARIANT EBS1C ILE-119</scope>
</reference>
<reference key="34">
    <citation type="journal article" date="1998" name="J. Invest. Dermatol.">
        <title>Severe palmo-plantar hyperkeratosis in Dowling-Meara epidermolysis bullosa simplex caused by a mutation in the keratin 14 gene (KRT14).</title>
        <authorList>
            <person name="Shemanko C.S."/>
            <person name="Mellerio J.E."/>
            <person name="Tidman M.J."/>
            <person name="Lane E.B."/>
            <person name="Eady R.A.J."/>
        </authorList>
    </citation>
    <scope>VARIANT EBS1A THR-119</scope>
</reference>
<reference key="35">
    <citation type="journal article" date="1998" name="J. Invest. Dermatol.">
        <title>Novel K5 and K14 mutations in German patients with the Weber-Cockayne variant of epidermolysis bullosa simplex.</title>
        <authorList>
            <person name="Mueller F.B."/>
            <person name="Kuester W."/>
            <person name="Bruckner-Tuderman L."/>
            <person name="Korge B.P."/>
        </authorList>
    </citation>
    <scope>VARIANT EBS1C GLY-273</scope>
</reference>
<reference key="36">
    <citation type="journal article" date="1999" name="Br. J. Dermatol.">
        <title>A recurrent keratin 14 mutation in Dowling-Meara epidermolysis bullosa simplex.</title>
        <authorList>
            <person name="Sasaki Y."/>
            <person name="Shimizu H."/>
            <person name="Akiyama M."/>
            <person name="Hiraoka Y."/>
            <person name="Takizawa Y."/>
            <person name="Yamada S."/>
            <person name="Morishima Y."/>
            <person name="Yamanishi K."/>
            <person name="Aiso S."/>
            <person name="Nishikawa T."/>
        </authorList>
    </citation>
    <scope>VARIANT EBS1A CYS-125</scope>
</reference>
<reference key="37">
    <citation type="journal article" date="1999" name="Eur. J. Hum. Genet. Suppl.">
        <title>Genomic keratin 14 mutation detection in epidermolysis bullosa simplex.</title>
        <authorList>
            <person name="Hut P.H.L."/>
            <person name="van der Vlies P."/>
            <person name="Jonkman M.F."/>
            <person name="Shimizu H."/>
            <person name="Buys C.H.C.M."/>
            <person name="Scheffer H."/>
        </authorList>
    </citation>
    <scope>VARIANT EBS1B HIS-415</scope>
    <scope>VARIANT EBS1A GLN-419</scope>
</reference>
<reference key="38">
    <citation type="journal article" date="1999" name="J. Invest. Dermatol.">
        <title>Identification of novel and known mutations in the genes for keratin 5 and 14 in Danish patients with epidermolysis bullosa simplex: correlation between genotype and phenotype.</title>
        <authorList>
            <person name="Soerensen C.B."/>
            <person name="Ladekjaer-Mikkelsen A.-S."/>
            <person name="Andresen B.S."/>
            <person name="Brandrup F."/>
            <person name="Veien N.K."/>
            <person name="Buus S.K."/>
            <person name="Anton-Lamprecht I."/>
            <person name="Kruse T.A."/>
            <person name="Jensen P.K.A."/>
            <person name="Eiberg H."/>
            <person name="Bolund L."/>
            <person name="Gregersen N."/>
        </authorList>
    </citation>
    <scope>VARIANT EBS1C ASN-116</scope>
    <scope>VARIANT EBS1A SER-123</scope>
    <scope>VARIANT EBS1B PRO-143</scope>
    <scope>VARIANT THR-94</scope>
    <scope>SEQUENCE REVISION TO 25 AND 43</scope>
</reference>
<reference key="39">
    <citation type="journal article" date="2000" name="Br. J. Dermatol.">
        <title>Laryngeal involvement in the Dowling-Meara variant of epidermolysis bullosa simplex with keratin mutations of severely disruptive potential.</title>
        <authorList>
            <person name="Shemanko C.S."/>
            <person name="Horn H.M."/>
            <person name="Keohane S.G."/>
            <person name="Hepburn N."/>
            <person name="Kerr A.I.G."/>
            <person name="Atherton D.J."/>
            <person name="Tidman M.J."/>
            <person name="Lane E.B."/>
        </authorList>
    </citation>
    <scope>VARIANT EBS1A HIS-125</scope>
</reference>
<reference key="40">
    <citation type="journal article" date="2000" name="J. Invest. Dermatol.">
        <title>Exempting homologous pseudogene sequences from polymerase chain reaction amplification allows genomic keratin 14 hotspot analysis.</title>
        <authorList>
            <person name="Hut P.H.L."/>
            <person name="van der Vlies P."/>
            <person name="Jonkman M.F."/>
            <person name="Verlind E."/>
            <person name="Shimizu H."/>
            <person name="Buys C.H.C.M."/>
            <person name="Scheffer H."/>
        </authorList>
    </citation>
    <scope>VARIANTS EBS1A CYS-125; HIS-125 AND GLN-419</scope>
    <scope>VARIANTS EBS1B ASP-247 AND HIS-415</scope>
    <scope>VARIANT EBS1C LYS-422</scope>
</reference>
<reference key="41">
    <citation type="journal article" date="2000" name="Prenat. Diagn.">
        <title>DNA based prenatal testing for the skin blistering disorder epidermolysis bullosa simplex.</title>
        <authorList>
            <person name="Rugg E.L."/>
            <person name="Baty D."/>
            <person name="Shemanko C.S."/>
            <person name="Magee G."/>
            <person name="Polak S."/>
            <person name="Bergman R."/>
            <person name="Kadar T."/>
            <person name="Boxer M."/>
            <person name="Falik-Zaccai T."/>
            <person name="Borochowitz Z."/>
            <person name="Lane E.B."/>
        </authorList>
    </citation>
    <scope>VARIANTS EBS1A CYS-125 AND HIS-415</scope>
    <scope>VARIANT EBS1B PRO-134</scope>
</reference>
<reference key="42">
    <citation type="journal article" date="2001" name="J. Invest. Dermatol.">
        <title>Keratin 14 point mutations at codon 119 of helix 1A resulting in different epidermolysis bullosa simplex phenotypes.</title>
        <authorList>
            <person name="Cummins R.E."/>
            <person name="Klingberg S."/>
            <person name="Wesley J."/>
            <person name="Rogers M."/>
            <person name="Zhao Y."/>
            <person name="Murrell D.F."/>
        </authorList>
    </citation>
    <scope>VARIANT EBS1A THR-119</scope>
    <scope>VARIANT EBS1B VAL-119</scope>
</reference>
<reference key="43">
    <citation type="journal article" date="2003" name="Arch. Dermatol.">
        <title>Epidermolysis bullosa simplex in Israel: clinical and genetic features.</title>
        <authorList>
            <person name="Ciubotaru D."/>
            <person name="Bergman R."/>
            <person name="Baty D."/>
            <person name="Indelman M."/>
            <person name="Pfendner E."/>
            <person name="Petronius D."/>
            <person name="Moualem H."/>
            <person name="Kanaan M."/>
            <person name="Ben Amitai D."/>
            <person name="McLean W.H.I."/>
            <person name="Uitto J."/>
            <person name="Sprecher E."/>
        </authorList>
    </citation>
    <scope>VARIANT EBS1C CYS-415</scope>
    <scope>VARIANT EBS1A HIS-125</scope>
    <scope>VARIANT EBS1D HIS-388</scope>
</reference>
<reference key="44">
    <citation type="journal article" date="2003" name="Arch. Dermatol.">
        <authorList>
            <person name="Ciubotaru D."/>
            <person name="Bergman R."/>
            <person name="Baty D."/>
            <person name="Indelman M."/>
            <person name="Pfendner E."/>
            <person name="Petronius D."/>
            <person name="Moualem H."/>
            <person name="Kanaan M."/>
            <person name="Ben Amitai D."/>
            <person name="McLean W.H.I."/>
            <person name="Uitto J."/>
            <person name="Sprecher E."/>
        </authorList>
    </citation>
    <scope>ERRATUM OF PUBMED:12707098</scope>
</reference>
<reference key="45">
    <citation type="journal article" date="2003" name="Hum. Mutat.">
        <title>Mutation analysis of the entire keratin 5 and 14 genes in patients with epidermolysis bullosa simplex and identification of novel mutations.</title>
        <authorList>
            <person name="Schuilenga-Hut P.H.L."/>
            <person name="Vlies P."/>
            <person name="Jonkman M.F."/>
            <person name="Waanders E."/>
            <person name="Buys C.H.C.M."/>
            <person name="Scheffer H."/>
        </authorList>
    </citation>
    <scope>VARIANTS EBS1A PRO-130 AND GLN-419</scope>
    <scope>VARIANT EBS1C MET-408</scope>
</reference>
<reference key="46">
    <citation type="journal article" date="2003" name="J. Invest. Dermatol.">
        <title>Long-range polymerase chain reaction for specific full-length amplification of the human keratin 14 gene and novel keratin 14 mutations in epidermolysis bullosa simplex patients.</title>
        <authorList>
            <person name="Wood P."/>
            <person name="Baty D.U."/>
            <person name="Lane E.B."/>
            <person name="McLean W.H.I."/>
        </authorList>
    </citation>
    <scope>VARIANTS EBS1A SER-128 DEL AND PRO-416</scope>
    <scope>VARIANT EBS1C CYS-148</scope>
</reference>
<reference key="47">
    <citation type="journal article" date="2004" name="Exp. Dermatol.">
        <title>Novel keratin 14 gene mutations in patients from Hungary with epidermolysis bullosa simplex.</title>
        <authorList>
            <person name="Csikos M."/>
            <person name="Szalai Z."/>
            <person name="Becker K."/>
            <person name="Sebok B."/>
            <person name="Schneider I."/>
            <person name="Horvath A."/>
            <person name="Karpati S."/>
        </authorList>
    </citation>
    <scope>VARIANTS EBS1A LYS-123 AND GLY-125</scope>
    <scope>VARIANT EBS1C LEU-133</scope>
</reference>
<reference key="48">
    <citation type="journal article" date="2006" name="Am. J. Hum. Genet.">
        <title>Naegeli-Franceschetti-Jadassohn syndrome and dermatopathia pigmentosa reticularis: two allelic ectodermal dysplasias caused by dominant mutations in KRT14.</title>
        <authorList>
            <person name="Lugassy J."/>
            <person name="Itin P."/>
            <person name="Ishida-Yamamoto A."/>
            <person name="Holland K."/>
            <person name="Huson S."/>
            <person name="Geiger D."/>
            <person name="Hennies H.C."/>
            <person name="Indelman M."/>
            <person name="Bercovich D."/>
            <person name="Uitto J."/>
            <person name="Bergman R."/>
            <person name="McGrath J.A."/>
            <person name="Richard G."/>
            <person name="Sprecher E."/>
        </authorList>
    </citation>
    <scope>INVOLVEMENT IN NFJS</scope>
    <scope>INVOLVEMENT IN DPR</scope>
</reference>
<reference key="49">
    <citation type="journal article" date="2006" name="Br. J. Dermatol.">
        <title>Epidermolysis bullosa simplex in Japanese and Korean patients: genetic studies in 19 cases.</title>
        <authorList>
            <person name="Yasukawa K."/>
            <person name="Sawamura D."/>
            <person name="Goto M."/>
            <person name="Nakamura H."/>
            <person name="Jung S.-Y."/>
            <person name="Kim S.-C."/>
            <person name="Shimizu H."/>
        </authorList>
    </citation>
    <scope>VARIANT EBS1C VAL-119</scope>
    <scope>VARIANTS EBS1A HIS-125 AND CYS-125</scope>
</reference>
<reference key="50">
    <citation type="journal article" date="2006" name="Hum. Mutat.">
        <title>Novel and recurrent mutations in keratin KRT5 and KRT14 genes in epidermolysis bullosa simplex: implications for disease phenotype and keratin filament assembly.</title>
        <authorList>
            <person name="Mueller F.B."/>
            <person name="Kuester W."/>
            <person name="Wodecki K."/>
            <person name="Almeida H. Jr."/>
            <person name="Bruckner-Tuderman L."/>
            <person name="Krieg T."/>
            <person name="Korge B.P."/>
            <person name="Arin M.J."/>
        </authorList>
    </citation>
    <scope>VARIANTS EBS1A LYS-123; CYS-125; HIS-125 AND PRO-417</scope>
    <scope>VARIANTS EBS1B LEU-133; THR-272 AND PRO-384</scope>
    <scope>VARIANTS EBS1C PRO-211 AND GLU-411 DEL</scope>
</reference>
<reference key="51">
    <citation type="journal article" date="2011" name="Br. J. Dermatol.">
        <title>Mutations in KRT5 and KRT14 cause epidermolysis bullosa simplex in 75% of the patients.</title>
        <authorList>
            <person name="Bolling M.C."/>
            <person name="Lemmink H.H."/>
            <person name="Jansen G.H."/>
            <person name="Jonkman M.F."/>
        </authorList>
    </citation>
    <scope>VARIANTS EBS1C ASN-377; THR-377; CYS-388; MET-408; GLU-411 DEL AND PHE-412</scope>
    <scope>VARIANTS EBS1A SER-123; CYS-125; PRO-130; ARG-272 AND GLN-419</scope>
</reference>
<reference key="52">
    <citation type="journal article" date="2012" name="J. Invest. Dermatol.">
        <title>Digenic inheritance in epidermolysis bullosa simplex.</title>
        <authorList>
            <person name="Padalon-Brauch G."/>
            <person name="Ben Amitai D."/>
            <person name="Vodo D."/>
            <person name="Harel A."/>
            <person name="Sarig O."/>
            <person name="Sprecher E."/>
            <person name="Mashiah J."/>
        </authorList>
    </citation>
    <scope>VARIANT EBS1D HIS-388</scope>
</reference>
<reference key="53">
    <citation type="journal article" date="2014" name="Exp. Dermatol.">
        <title>Novel KRT14 mutation causing epidermolysis bullosa simplex with variable phenotype.</title>
        <authorList>
            <person name="Jankowski M."/>
            <person name="Wertheim-Tysarowska K."/>
            <person name="Jakubowski R."/>
            <person name="Sota J."/>
            <person name="Nowak W."/>
            <person name="Czajkowski R."/>
        </authorList>
    </citation>
    <scope>VARIANT GLN-418</scope>
</reference>
<reference key="54">
    <citation type="journal article" date="2016" name="J. Appl. Genet.">
        <title>Novel sporadic and recurrent mutations in KRT5 and KRT14 genes in Polish epidermolysis bullosa simplex patients: further insights into epidemiology and genotype-phenotype correlation.</title>
        <authorList>
            <person name="Wertheim-Tysarowska K."/>
            <person name="Oldak M."/>
            <person name="Giza A."/>
            <person name="Kutkowska-Kazmierczak A."/>
            <person name="Sota J."/>
            <person name="Przybylska D."/>
            <person name="Wozniak K."/>
            <person name="Sniegorska D."/>
            <person name="Niepokoj K."/>
            <person name="Sobczynska-Tomaszewska A."/>
            <person name="Rygiel A.M."/>
            <person name="Ploski R."/>
            <person name="Bal J."/>
            <person name="Kowalewski C."/>
        </authorList>
    </citation>
    <scope>VARIANTS EBS1A THR-119; SER-123; CYS-125; HIS-125 AND ASP-129</scope>
    <scope>VARIANTS EBS1C MET-133; ALA-270; THR-272; THR-413 AND GLN-418</scope>
    <scope>VARIANTS EPIDERMOLYSIS BULLOSA SIMPLEX LEU-125; CYS-388 AND GLU-411 DEL</scope>
</reference>
<sequence>MTTCSRQFTSSSSMKGSCGIGGGIGGGSSRISSVLAGGSCRAPSTYGGGLSVSSSRFSSGGACGLGGGYGGGFSSSSSSFGSGFGGGYGGGLGAGLGGGFGGGFAGGDGLLVGSEKVTMQNLNDRLASYLDKVRALEEANADLEVKIRDWYQRQRPAEIKDYSPYFKTIEDLRNKILTATVDNANVLLQIDNARLAADDFRTKYETELNLRMSVEADINGLRRVLDELTLARADLEMQIESLKEELAYLKKNHEEEMNALRGQVGGDVNVEMDAAPGVDLSRILNEMRDQYEKMAEKNRKDAEEWFFTKTEELNREVATNSELVQSGKSEISELRRTMQNLEIELQSQLSMKASLENSLEETKGRYCMQLAQIQEMIGSVEEQLAQLRCEMEQQNQEYKILLDVKTRLEQEIATYRRLLEGEDAHLSSSQFSSGSQSSRDVTSSSRQIRTKVMDVHDGKVVSTHEQVLRTKN</sequence>
<dbReference type="EMBL" id="J00124">
    <property type="protein sequence ID" value="AAB59562.1"/>
    <property type="molecule type" value="Genomic_DNA"/>
</dbReference>
<dbReference type="EMBL" id="BT007186">
    <property type="protein sequence ID" value="AAP35850.1"/>
    <property type="molecule type" value="mRNA"/>
</dbReference>
<dbReference type="EMBL" id="AC019349">
    <property type="status" value="NOT_ANNOTATED_CDS"/>
    <property type="molecule type" value="Genomic_DNA"/>
</dbReference>
<dbReference type="EMBL" id="BC002690">
    <property type="protein sequence ID" value="AAH02690.1"/>
    <property type="molecule type" value="mRNA"/>
</dbReference>
<dbReference type="EMBL" id="BC019097">
    <property type="protein sequence ID" value="AAH19097.1"/>
    <property type="molecule type" value="mRNA"/>
</dbReference>
<dbReference type="EMBL" id="BC042437">
    <property type="protein sequence ID" value="AAH42437.1"/>
    <property type="molecule type" value="mRNA"/>
</dbReference>
<dbReference type="EMBL" id="BC094830">
    <property type="protein sequence ID" value="AAH94830.1"/>
    <property type="molecule type" value="mRNA"/>
</dbReference>
<dbReference type="EMBL" id="D28807">
    <property type="protein sequence ID" value="BAA05967.1"/>
    <property type="molecule type" value="Genomic_DNA"/>
</dbReference>
<dbReference type="EMBL" id="AF186085">
    <property type="protein sequence ID" value="AAF04034.1"/>
    <property type="molecule type" value="Genomic_DNA"/>
</dbReference>
<dbReference type="EMBL" id="AF186086">
    <property type="protein sequence ID" value="AAF04035.1"/>
    <property type="molecule type" value="Genomic_DNA"/>
</dbReference>
<dbReference type="EMBL" id="AF186087">
    <property type="protein sequence ID" value="AAF04036.1"/>
    <property type="molecule type" value="Genomic_DNA"/>
</dbReference>
<dbReference type="EMBL" id="AF186088">
    <property type="protein sequence ID" value="AAF04037.1"/>
    <property type="molecule type" value="Genomic_DNA"/>
</dbReference>
<dbReference type="EMBL" id="AF186089">
    <property type="protein sequence ID" value="AAF04038.1"/>
    <property type="molecule type" value="Genomic_DNA"/>
</dbReference>
<dbReference type="EMBL" id="AF186090">
    <property type="protein sequence ID" value="AAF04039.1"/>
    <property type="molecule type" value="Genomic_DNA"/>
</dbReference>
<dbReference type="CCDS" id="CCDS11400.1"/>
<dbReference type="PIR" id="A26763">
    <property type="entry name" value="KRHUE"/>
</dbReference>
<dbReference type="RefSeq" id="NP_000517.2">
    <property type="nucleotide sequence ID" value="NM_000526.4"/>
</dbReference>
<dbReference type="PDB" id="3TNU">
    <property type="method" value="X-ray"/>
    <property type="resolution" value="3.00 A"/>
    <property type="chains" value="A=295-422"/>
</dbReference>
<dbReference type="PDB" id="6JFV">
    <property type="method" value="X-ray"/>
    <property type="resolution" value="2.60 A"/>
    <property type="chains" value="A/C=327-421"/>
</dbReference>
<dbReference type="PDBsum" id="3TNU"/>
<dbReference type="PDBsum" id="6JFV"/>
<dbReference type="SMR" id="P02533"/>
<dbReference type="BioGRID" id="110059">
    <property type="interactions" value="194"/>
</dbReference>
<dbReference type="ComplexPortal" id="CPX-888">
    <property type="entry name" value="Keratin-5 - Keratin-14 dimer complex"/>
</dbReference>
<dbReference type="CORUM" id="P02533"/>
<dbReference type="DIP" id="DIP-33874N"/>
<dbReference type="FunCoup" id="P02533">
    <property type="interactions" value="423"/>
</dbReference>
<dbReference type="IntAct" id="P02533">
    <property type="interactions" value="80"/>
</dbReference>
<dbReference type="MINT" id="P02533"/>
<dbReference type="STRING" id="9606.ENSP00000167586"/>
<dbReference type="DrugBank" id="DB01593">
    <property type="generic name" value="Zinc"/>
</dbReference>
<dbReference type="DrugBank" id="DB14487">
    <property type="generic name" value="Zinc acetate"/>
</dbReference>
<dbReference type="GlyGen" id="P02533">
    <property type="glycosylation" value="4 sites, 1 O-linked glycan (1 site)"/>
</dbReference>
<dbReference type="iPTMnet" id="P02533"/>
<dbReference type="PhosphoSitePlus" id="P02533"/>
<dbReference type="SwissPalm" id="P02533"/>
<dbReference type="BioMuta" id="KRT14"/>
<dbReference type="DMDM" id="229463044"/>
<dbReference type="jPOST" id="P02533"/>
<dbReference type="MassIVE" id="P02533"/>
<dbReference type="PaxDb" id="9606-ENSP00000167586"/>
<dbReference type="PeptideAtlas" id="P02533"/>
<dbReference type="PRIDE" id="P02533"/>
<dbReference type="ProteomicsDB" id="51528"/>
<dbReference type="Antibodypedia" id="3600">
    <property type="antibodies" value="1455 antibodies from 51 providers"/>
</dbReference>
<dbReference type="DNASU" id="3861"/>
<dbReference type="Ensembl" id="ENST00000167586.7">
    <property type="protein sequence ID" value="ENSP00000167586.6"/>
    <property type="gene ID" value="ENSG00000186847.6"/>
</dbReference>
<dbReference type="GeneID" id="3861"/>
<dbReference type="KEGG" id="hsa:3861"/>
<dbReference type="MANE-Select" id="ENST00000167586.7">
    <property type="protein sequence ID" value="ENSP00000167586.6"/>
    <property type="RefSeq nucleotide sequence ID" value="NM_000526.5"/>
    <property type="RefSeq protein sequence ID" value="NP_000517.3"/>
</dbReference>
<dbReference type="UCSC" id="uc002hxf.3">
    <property type="organism name" value="human"/>
</dbReference>
<dbReference type="AGR" id="HGNC:6416"/>
<dbReference type="CTD" id="3861"/>
<dbReference type="DisGeNET" id="3861"/>
<dbReference type="GeneCards" id="KRT14"/>
<dbReference type="GeneReviews" id="KRT14"/>
<dbReference type="HGNC" id="HGNC:6416">
    <property type="gene designation" value="KRT14"/>
</dbReference>
<dbReference type="HPA" id="ENSG00000186847">
    <property type="expression patterns" value="Tissue enriched (skin)"/>
</dbReference>
<dbReference type="MalaCards" id="KRT14"/>
<dbReference type="MIM" id="125595">
    <property type="type" value="phenotype"/>
</dbReference>
<dbReference type="MIM" id="131760">
    <property type="type" value="phenotype"/>
</dbReference>
<dbReference type="MIM" id="131800">
    <property type="type" value="phenotype"/>
</dbReference>
<dbReference type="MIM" id="131900">
    <property type="type" value="phenotype"/>
</dbReference>
<dbReference type="MIM" id="148066">
    <property type="type" value="gene"/>
</dbReference>
<dbReference type="MIM" id="161000">
    <property type="type" value="phenotype"/>
</dbReference>
<dbReference type="MIM" id="601001">
    <property type="type" value="phenotype"/>
</dbReference>
<dbReference type="neXtProt" id="NX_P02533"/>
<dbReference type="OpenTargets" id="ENSG00000186847"/>
<dbReference type="Orphanet" id="79399">
    <property type="disease" value="Autosomal dominant generalized epidermolysis bullosa simplex, intermediate form"/>
</dbReference>
<dbReference type="Orphanet" id="79396">
    <property type="disease" value="Autosomal dominant generalized epidermolysis bullosa simplex, severe form"/>
</dbReference>
<dbReference type="Orphanet" id="89838">
    <property type="disease" value="Autosomal recessive generalized epidermolysis bullosa simplex"/>
</dbReference>
<dbReference type="Orphanet" id="86920">
    <property type="disease" value="Dermatopathia pigmentosa reticularis"/>
</dbReference>
<dbReference type="Orphanet" id="79397">
    <property type="disease" value="Epidermolysis bullosa simplex with mottled pigmentation"/>
</dbReference>
<dbReference type="Orphanet" id="79400">
    <property type="disease" value="Localized epidermolysis bullosa simplex"/>
</dbReference>
<dbReference type="Orphanet" id="69087">
    <property type="disease" value="Naegeli-Franceschetti-Jadassohn syndrome"/>
</dbReference>
<dbReference type="PharmGKB" id="PA30203"/>
<dbReference type="VEuPathDB" id="HostDB:ENSG00000186847"/>
<dbReference type="eggNOG" id="ENOG502R8V7">
    <property type="taxonomic scope" value="Eukaryota"/>
</dbReference>
<dbReference type="GeneTree" id="ENSGT00940000154602"/>
<dbReference type="HOGENOM" id="CLU_012560_8_1_1"/>
<dbReference type="InParanoid" id="P02533"/>
<dbReference type="OMA" id="PTEMKDY"/>
<dbReference type="OrthoDB" id="2441647at2759"/>
<dbReference type="PAN-GO" id="P02533">
    <property type="GO annotations" value="4 GO annotations based on evolutionary models"/>
</dbReference>
<dbReference type="PhylomeDB" id="P02533"/>
<dbReference type="TreeFam" id="TF332742"/>
<dbReference type="PathwayCommons" id="P02533"/>
<dbReference type="Reactome" id="R-HSA-446107">
    <property type="pathway name" value="Type I hemidesmosome assembly"/>
</dbReference>
<dbReference type="Reactome" id="R-HSA-6805567">
    <property type="pathway name" value="Keratinization"/>
</dbReference>
<dbReference type="Reactome" id="R-HSA-6809371">
    <property type="pathway name" value="Formation of the cornified envelope"/>
</dbReference>
<dbReference type="Reactome" id="R-HSA-9725554">
    <property type="pathway name" value="Differentiation of Keratinocytes in Interfollicular Epidermis in Mammalian Skin"/>
</dbReference>
<dbReference type="SignaLink" id="P02533"/>
<dbReference type="SIGNOR" id="P02533"/>
<dbReference type="BioGRID-ORCS" id="3861">
    <property type="hits" value="17 hits in 1123 CRISPR screens"/>
</dbReference>
<dbReference type="ChiTaRS" id="KRT14">
    <property type="organism name" value="human"/>
</dbReference>
<dbReference type="EvolutionaryTrace" id="P02533"/>
<dbReference type="GeneWiki" id="Keratin_14"/>
<dbReference type="GenomeRNAi" id="3861"/>
<dbReference type="Pharos" id="P02533">
    <property type="development level" value="Tbio"/>
</dbReference>
<dbReference type="PRO" id="PR:P02533"/>
<dbReference type="Proteomes" id="UP000005640">
    <property type="component" value="Chromosome 17"/>
</dbReference>
<dbReference type="RNAct" id="P02533">
    <property type="molecule type" value="protein"/>
</dbReference>
<dbReference type="Bgee" id="ENSG00000186847">
    <property type="expression patterns" value="Expressed in gingival epithelium and 121 other cell types or tissues"/>
</dbReference>
<dbReference type="GO" id="GO:0045178">
    <property type="term" value="C:basal part of cell"/>
    <property type="evidence" value="ECO:0007669"/>
    <property type="project" value="Ensembl"/>
</dbReference>
<dbReference type="GO" id="GO:0001533">
    <property type="term" value="C:cornified envelope"/>
    <property type="evidence" value="ECO:0007669"/>
    <property type="project" value="Ensembl"/>
</dbReference>
<dbReference type="GO" id="GO:0005737">
    <property type="term" value="C:cytoplasm"/>
    <property type="evidence" value="ECO:0000314"/>
    <property type="project" value="UniProtKB"/>
</dbReference>
<dbReference type="GO" id="GO:0005856">
    <property type="term" value="C:cytoskeleton"/>
    <property type="evidence" value="ECO:0000318"/>
    <property type="project" value="GO_Central"/>
</dbReference>
<dbReference type="GO" id="GO:0005829">
    <property type="term" value="C:cytosol"/>
    <property type="evidence" value="ECO:0000304"/>
    <property type="project" value="Reactome"/>
</dbReference>
<dbReference type="GO" id="GO:0070062">
    <property type="term" value="C:extracellular exosome"/>
    <property type="evidence" value="ECO:0007005"/>
    <property type="project" value="UniProtKB"/>
</dbReference>
<dbReference type="GO" id="GO:0005882">
    <property type="term" value="C:intermediate filament"/>
    <property type="evidence" value="ECO:0000314"/>
    <property type="project" value="BHF-UCL"/>
</dbReference>
<dbReference type="GO" id="GO:0045095">
    <property type="term" value="C:keratin filament"/>
    <property type="evidence" value="ECO:0000314"/>
    <property type="project" value="MGI"/>
</dbReference>
<dbReference type="GO" id="GO:0005634">
    <property type="term" value="C:nucleus"/>
    <property type="evidence" value="ECO:0000314"/>
    <property type="project" value="UniProtKB"/>
</dbReference>
<dbReference type="GO" id="GO:1990254">
    <property type="term" value="F:keratin filament binding"/>
    <property type="evidence" value="ECO:0000353"/>
    <property type="project" value="UniProtKB"/>
</dbReference>
<dbReference type="GO" id="GO:0005200">
    <property type="term" value="F:structural constituent of cytoskeleton"/>
    <property type="evidence" value="ECO:0000304"/>
    <property type="project" value="ProtInc"/>
</dbReference>
<dbReference type="GO" id="GO:0008544">
    <property type="term" value="P:epidermis development"/>
    <property type="evidence" value="ECO:0000304"/>
    <property type="project" value="ProtInc"/>
</dbReference>
<dbReference type="GO" id="GO:0030855">
    <property type="term" value="P:epithelial cell differentiation"/>
    <property type="evidence" value="ECO:0000318"/>
    <property type="project" value="GO_Central"/>
</dbReference>
<dbReference type="GO" id="GO:0042633">
    <property type="term" value="P:hair cycle"/>
    <property type="evidence" value="ECO:0000314"/>
    <property type="project" value="UniProtKB"/>
</dbReference>
<dbReference type="GO" id="GO:0045110">
    <property type="term" value="P:intermediate filament bundle assembly"/>
    <property type="evidence" value="ECO:0000315"/>
    <property type="project" value="UniProtKB"/>
</dbReference>
<dbReference type="GO" id="GO:0045109">
    <property type="term" value="P:intermediate filament organization"/>
    <property type="evidence" value="ECO:0000318"/>
    <property type="project" value="GO_Central"/>
</dbReference>
<dbReference type="GO" id="GO:0030216">
    <property type="term" value="P:keratinocyte differentiation"/>
    <property type="evidence" value="ECO:0007669"/>
    <property type="project" value="Ensembl"/>
</dbReference>
<dbReference type="GO" id="GO:0009314">
    <property type="term" value="P:response to radiation"/>
    <property type="evidence" value="ECO:0007669"/>
    <property type="project" value="Ensembl"/>
</dbReference>
<dbReference type="GO" id="GO:0048863">
    <property type="term" value="P:stem cell differentiation"/>
    <property type="evidence" value="ECO:0007669"/>
    <property type="project" value="Ensembl"/>
</dbReference>
<dbReference type="DisProt" id="DP02605"/>
<dbReference type="FunFam" id="1.20.5.1160:FF:000002">
    <property type="entry name" value="Type I keratin 10"/>
    <property type="match status" value="1"/>
</dbReference>
<dbReference type="FunFam" id="1.20.5.170:FF:000002">
    <property type="entry name" value="Type I keratin KA11"/>
    <property type="match status" value="1"/>
</dbReference>
<dbReference type="FunFam" id="1.20.5.500:FF:000001">
    <property type="entry name" value="Type II keratin 23"/>
    <property type="match status" value="1"/>
</dbReference>
<dbReference type="Gene3D" id="1.20.5.170">
    <property type="match status" value="1"/>
</dbReference>
<dbReference type="Gene3D" id="1.20.5.500">
    <property type="entry name" value="Single helix bin"/>
    <property type="match status" value="1"/>
</dbReference>
<dbReference type="Gene3D" id="1.20.5.1160">
    <property type="entry name" value="Vasodilator-stimulated phosphoprotein"/>
    <property type="match status" value="1"/>
</dbReference>
<dbReference type="InterPro" id="IPR018039">
    <property type="entry name" value="IF_conserved"/>
</dbReference>
<dbReference type="InterPro" id="IPR039008">
    <property type="entry name" value="IF_rod_dom"/>
</dbReference>
<dbReference type="InterPro" id="IPR002957">
    <property type="entry name" value="Keratin_I"/>
</dbReference>
<dbReference type="PANTHER" id="PTHR23239">
    <property type="entry name" value="INTERMEDIATE FILAMENT"/>
    <property type="match status" value="1"/>
</dbReference>
<dbReference type="PANTHER" id="PTHR23239:SF368">
    <property type="entry name" value="KERATIN, TYPE I CYTOSKELETAL 14"/>
    <property type="match status" value="1"/>
</dbReference>
<dbReference type="Pfam" id="PF00038">
    <property type="entry name" value="Filament"/>
    <property type="match status" value="1"/>
</dbReference>
<dbReference type="PRINTS" id="PR01248">
    <property type="entry name" value="TYPE1KERATIN"/>
</dbReference>
<dbReference type="SMART" id="SM01391">
    <property type="entry name" value="Filament"/>
    <property type="match status" value="1"/>
</dbReference>
<dbReference type="SUPFAM" id="SSF64593">
    <property type="entry name" value="Intermediate filament protein, coiled coil region"/>
    <property type="match status" value="2"/>
</dbReference>
<dbReference type="SUPFAM" id="SSF46579">
    <property type="entry name" value="Prefoldin"/>
    <property type="match status" value="1"/>
</dbReference>
<dbReference type="PROSITE" id="PS00226">
    <property type="entry name" value="IF_ROD_1"/>
    <property type="match status" value="1"/>
</dbReference>
<dbReference type="PROSITE" id="PS51842">
    <property type="entry name" value="IF_ROD_2"/>
    <property type="match status" value="1"/>
</dbReference>
<gene>
    <name type="primary">KRT14</name>
</gene>
<organism>
    <name type="scientific">Homo sapiens</name>
    <name type="common">Human</name>
    <dbReference type="NCBI Taxonomy" id="9606"/>
    <lineage>
        <taxon>Eukaryota</taxon>
        <taxon>Metazoa</taxon>
        <taxon>Chordata</taxon>
        <taxon>Craniata</taxon>
        <taxon>Vertebrata</taxon>
        <taxon>Euteleostomi</taxon>
        <taxon>Mammalia</taxon>
        <taxon>Eutheria</taxon>
        <taxon>Euarchontoglires</taxon>
        <taxon>Primates</taxon>
        <taxon>Haplorrhini</taxon>
        <taxon>Catarrhini</taxon>
        <taxon>Hominidae</taxon>
        <taxon>Homo</taxon>
    </lineage>
</organism>
<proteinExistence type="evidence at protein level"/>
<feature type="chain" id="PRO_0000063653" description="Keratin, type I cytoskeletal 14">
    <location>
        <begin position="1"/>
        <end position="472"/>
    </location>
</feature>
<feature type="domain" description="IF rod" evidence="2">
    <location>
        <begin position="115"/>
        <end position="426"/>
    </location>
</feature>
<feature type="region of interest" description="Head">
    <location>
        <begin position="1"/>
        <end position="114"/>
    </location>
</feature>
<feature type="region of interest" description="Coil 1A">
    <location>
        <begin position="115"/>
        <end position="150"/>
    </location>
</feature>
<feature type="region of interest" description="Linker 1">
    <location>
        <begin position="151"/>
        <end position="168"/>
    </location>
</feature>
<feature type="region of interest" description="Coil 1B">
    <location>
        <begin position="169"/>
        <end position="260"/>
    </location>
</feature>
<feature type="region of interest" description="Linker 12">
    <location>
        <begin position="261"/>
        <end position="283"/>
    </location>
</feature>
<feature type="region of interest" description="Coil 2">
    <location>
        <begin position="284"/>
        <end position="422"/>
    </location>
</feature>
<feature type="region of interest" description="Tail">
    <location>
        <begin position="423"/>
        <end position="472"/>
    </location>
</feature>
<feature type="region of interest" description="Interaction with Type I keratins and keratin filaments">
    <location>
        <begin position="425"/>
        <end position="472"/>
    </location>
</feature>
<feature type="region of interest" description="Disordered" evidence="3">
    <location>
        <begin position="426"/>
        <end position="472"/>
    </location>
</feature>
<feature type="compositionally biased region" description="Low complexity" evidence="3">
    <location>
        <begin position="427"/>
        <end position="445"/>
    </location>
</feature>
<feature type="site" description="Stutter">
    <location>
        <position position="364"/>
    </location>
</feature>
<feature type="modified residue" description="Phosphoserine" evidence="1">
    <location>
        <position position="435"/>
    </location>
</feature>
<feature type="disulfide bond" description="Interchain" evidence="23">
    <location>
        <position position="367"/>
    </location>
</feature>
<feature type="sequence variant" id="VAR_055347" description="In dbSNP:rs6503640." evidence="16 27 47">
    <original>C</original>
    <variation>Y</variation>
    <location>
        <position position="63"/>
    </location>
</feature>
<feature type="sequence variant" id="VAR_010437" description="In dbSNP:rs3826550." evidence="16 45 47">
    <original>A</original>
    <variation>T</variation>
    <location>
        <position position="94"/>
    </location>
</feature>
<feature type="sequence variant" id="VAR_010438" description="In EBS1C; dbSNP:rs59271739." evidence="45">
    <original>K</original>
    <variation>N</variation>
    <location>
        <position position="116"/>
    </location>
</feature>
<feature type="sequence variant" id="VAR_010439" description="In EBS1C; dbSNP:rs57358989." evidence="37 41">
    <original>M</original>
    <variation>I</variation>
    <location>
        <position position="119"/>
    </location>
</feature>
<feature type="sequence variant" id="VAR_010440" description="In EBS1A; dbSNP:rs28928893." evidence="10 28 43">
    <original>M</original>
    <variation>T</variation>
    <location>
        <position position="119"/>
    </location>
</feature>
<feature type="sequence variant" id="VAR_023719" description="In EBS1B and EBS1C; dbSNP:rs61263401." evidence="10 18">
    <original>M</original>
    <variation>V</variation>
    <location>
        <position position="119"/>
    </location>
</feature>
<feature type="sequence variant" id="VAR_010441" description="In EBS1A; dbSNP:rs60993843." evidence="37">
    <original>Q</original>
    <variation>R</variation>
    <location>
        <position position="120"/>
    </location>
</feature>
<feature type="sequence variant" id="VAR_010442" description="In EBS1A and EBS1B; dbSNP:rs59110575." evidence="20 35">
    <original>L</original>
    <variation>F</variation>
    <location>
        <position position="122"/>
    </location>
</feature>
<feature type="sequence variant" id="VAR_023720" description="In EBS1A; dbSNP:rs3826549." evidence="15 17">
    <original>N</original>
    <variation>K</variation>
    <location>
        <position position="123"/>
    </location>
</feature>
<feature type="sequence variant" id="VAR_010443" description="In EBS1A; dbSNP:rs60171927." evidence="22 28 45">
    <original>N</original>
    <variation>S</variation>
    <location>
        <position position="123"/>
    </location>
</feature>
<feature type="sequence variant" id="VAR_003837" description="In EBS1A; dbSNP:rs60399023." evidence="4 6 7 17 18 20 22 28 37">
    <original>R</original>
    <variation>C</variation>
    <location>
        <position position="125"/>
    </location>
</feature>
<feature type="sequence variant" id="VAR_023721" description="In EBS1A; dbSNP:rs60399023." evidence="15">
    <original>R</original>
    <variation>G</variation>
    <location>
        <position position="125"/>
    </location>
</feature>
<feature type="sequence variant" id="VAR_003838" description="In EBS1A; dbSNP:rs58330629." evidence="5 6 14 17 18 20 28 39">
    <original>R</original>
    <variation>H</variation>
    <location>
        <position position="125"/>
    </location>
</feature>
<feature type="sequence variant" id="VAR_086617" description="Found in a patient with epidermolysis bullosa simplex with unspecified subtype; likely pathogenic; dbSNP:rs58330629." evidence="28">
    <original>R</original>
    <variation>L</variation>
    <location>
        <position position="125"/>
    </location>
</feature>
<feature type="sequence variant" id="VAR_010444" description="In EBS1A; dbSNP:rs60399023." evidence="37">
    <original>R</original>
    <variation>S</variation>
    <location>
        <position position="125"/>
    </location>
</feature>
<feature type="sequence variant" id="VAR_031634" description="In EBS1A." evidence="12">
    <location>
        <position position="128"/>
    </location>
</feature>
<feature type="sequence variant" id="VAR_010445" description="In EBS1A; dbSNP:rs60470268." evidence="28 40">
    <original>Y</original>
    <variation>D</variation>
    <location>
        <position position="129"/>
    </location>
</feature>
<feature type="sequence variant" id="VAR_023722" description="In EBS1A; uncertain significance; dbSNP:rs57522245." evidence="13 22">
    <original>L</original>
    <variation>P</variation>
    <location>
        <position position="130"/>
    </location>
</feature>
<feature type="sequence variant" id="VAR_033496" description="In dbSNP:rs1555603282.">
    <original>V</original>
    <variation>A</variation>
    <location>
        <position position="133"/>
    </location>
</feature>
<feature type="sequence variant" id="VAR_023723" description="In EBS1C and EBS1B; dbSNP:rs61027685." evidence="15 17">
    <original>V</original>
    <variation>L</variation>
    <location>
        <position position="133"/>
    </location>
</feature>
<feature type="sequence variant" id="VAR_086618" description="In EBS1C; dbSNP:rs61027685." evidence="28">
    <original>V</original>
    <variation>M</variation>
    <location>
        <position position="133"/>
    </location>
</feature>
<feature type="sequence variant" id="VAR_031635" description="In EBS1B; dbSNP:rs61540016." evidence="7">
    <original>R</original>
    <variation>P</variation>
    <location>
        <position position="134"/>
    </location>
</feature>
<feature type="sequence variant" id="VAR_010446" description="In EBS1B; dbSNP:rs61326242." evidence="45">
    <original>L</original>
    <variation>P</variation>
    <location>
        <position position="143"/>
    </location>
</feature>
<feature type="sequence variant" id="VAR_003839" description="In EBS1D; dbSNP:rs57121345." evidence="36">
    <original>E</original>
    <variation>A</variation>
    <location>
        <position position="144"/>
    </location>
</feature>
<feature type="sequence variant" id="VAR_031636" description="In EBS1C; dbSNP:rs58378809." evidence="12">
    <original>R</original>
    <variation>C</variation>
    <location>
        <position position="148"/>
    </location>
</feature>
<feature type="sequence variant" id="VAR_027718" description="In EBS1C; dbSNP:rs60589227." evidence="17">
    <original>R</original>
    <variation>P</variation>
    <location>
        <position position="211"/>
    </location>
</feature>
<feature type="sequence variant" id="VAR_049784" description="In dbSNP:rs11551755.">
    <original>E</original>
    <variation>K</variation>
    <location>
        <position position="215"/>
    </location>
</feature>
<feature type="sequence variant" id="VAR_010447" description="In EBS1B; dbSNP:rs147611635." evidence="6">
    <original>A</original>
    <variation>D</variation>
    <location>
        <position position="247"/>
    </location>
</feature>
<feature type="sequence variant" id="VAR_086619" description="In EBS1C." evidence="28">
    <original>V</original>
    <variation>A</variation>
    <location>
        <position position="270"/>
    </location>
</feature>
<feature type="sequence variant" id="VAR_086620" description="In EBS1A; dbSNP:rs58560979." evidence="33">
    <original>V</original>
    <variation>M</variation>
    <location>
        <position position="270"/>
    </location>
</feature>
<feature type="sequence variant" id="VAR_003841" description="In EBS1B and EBS1A; dbSNP:rs61371557." evidence="22 38">
    <original>M</original>
    <variation>R</variation>
    <location>
        <position position="272"/>
    </location>
</feature>
<feature type="sequence variant" id="VAR_027719" description="In EBS1B and EBS1C; dbSNP:rs61371557." evidence="17 28">
    <original>M</original>
    <variation>T</variation>
    <location>
        <position position="272"/>
    </location>
</feature>
<feature type="sequence variant" id="VAR_010448" description="In EBS1C; dbSNP:rs59375065." evidence="44">
    <original>D</original>
    <variation>G</variation>
    <location>
        <position position="273"/>
    </location>
</feature>
<feature type="sequence variant" id="VAR_010449" description="In EBS1C; dbSNP:rs58785777." evidence="37">
    <original>A</original>
    <variation>D</variation>
    <location>
        <position position="274"/>
    </location>
</feature>
<feature type="sequence variant" id="VAR_003842" description="In EBS1C; dbSNP:rs56974573." evidence="34">
    <location>
        <position position="375"/>
    </location>
</feature>
<feature type="sequence variant" id="VAR_010450" description="In EBS1C; dbSNP:rs61536893." evidence="22 37">
    <original>I</original>
    <variation>N</variation>
    <location>
        <position position="377"/>
    </location>
</feature>
<feature type="sequence variant" id="VAR_086621" description="In EBS1C; uncertain significance; dbSNP:rs61536893." evidence="22">
    <original>I</original>
    <variation>T</variation>
    <location>
        <position position="377"/>
    </location>
</feature>
<feature type="sequence variant" id="VAR_003843" description="In EBS1B; dbSNP:rs59629244." evidence="17 21">
    <original>L</original>
    <variation>P</variation>
    <location>
        <position position="384"/>
    </location>
</feature>
<feature type="sequence variant" id="VAR_010451" description="In EBS1C; also found in a patient with epidermolysis bullosa simplex with unspecified subtype; dbSNP:rs59966597." evidence="22 28 37">
    <original>R</original>
    <variation>C</variation>
    <location>
        <position position="388"/>
    </location>
</feature>
<feature type="sequence variant" id="VAR_031637" description="In EBS1D; dbSNP:rs58645163." evidence="14 24">
    <original>R</original>
    <variation>H</variation>
    <location>
        <position position="388"/>
    </location>
</feature>
<feature type="sequence variant" id="VAR_023724" description="In EBS1C; dbSNP:rs57200223." evidence="13 22">
    <original>L</original>
    <variation>M</variation>
    <location>
        <position position="408"/>
    </location>
</feature>
<feature type="sequence variant" id="VAR_027720" description="In EBS1C; also found in a patient with epidermolysis bullosa simplex with unspecified subtype; dbSNP:rs267607389." evidence="17 22 28">
    <location>
        <position position="411"/>
    </location>
</feature>
<feature type="sequence variant" id="VAR_086622" description="In EBS1C; uncertain significance; dbSNP:rs267607403." evidence="22">
    <original>I</original>
    <variation>F</variation>
    <location>
        <position position="412"/>
    </location>
</feature>
<feature type="sequence variant" id="VAR_023725" description="In EBS1B and EBS1C; uncertain significance; dbSNP:rs59780231." evidence="28 46">
    <original>A</original>
    <variation>T</variation>
    <location>
        <position position="413"/>
    </location>
</feature>
<feature type="sequence variant" id="VAR_031638" description="In EBS1C; dbSNP:rs59442925." evidence="14">
    <original>Y</original>
    <variation>C</variation>
    <location>
        <position position="415"/>
    </location>
</feature>
<feature type="sequence variant" id="VAR_003844" description="In EBS1B; dbSNP:rs58380626." evidence="6 7 48">
    <original>Y</original>
    <variation>H</variation>
    <location>
        <position position="415"/>
    </location>
</feature>
<feature type="sequence variant" id="VAR_031639" description="In EBS1A; dbSNP:rs60622724." evidence="12">
    <original>R</original>
    <variation>P</variation>
    <location>
        <position position="416"/>
    </location>
</feature>
<feature type="sequence variant" id="VAR_027721" description="In EBS1A; dbSNP:rs61085704." evidence="17">
    <original>R</original>
    <variation>P</variation>
    <location>
        <position position="417"/>
    </location>
</feature>
<feature type="sequence variant" id="VAR_071705" description="In EBS1C." evidence="26 28">
    <original>L</original>
    <variation>Q</variation>
    <location>
        <position position="418"/>
    </location>
</feature>
<feature type="sequence variant" id="VAR_003845" description="In EBS1A; dbSNP:rs57364972." evidence="6 13 22 48">
    <original>L</original>
    <variation>Q</variation>
    <location>
        <position position="419"/>
    </location>
</feature>
<feature type="sequence variant" id="VAR_010452" description="In EBS1C; dbSNP:rs58762773." evidence="6">
    <original>E</original>
    <variation>K</variation>
    <location>
        <position position="422"/>
    </location>
</feature>
<feature type="mutagenesis site" description="Increase in keratin-positive aggregates and keratin intermediate filament networks that are very thin and sparse with short filaments." evidence="31">
    <original>R</original>
    <variation>A</variation>
    <location>
        <position position="335"/>
    </location>
</feature>
<feature type="mutagenesis site" description="Increase in keratin-positive aggregates and keratin intermediate filament networks that are very thin and sparse with short filaments." evidence="31">
    <original>E</original>
    <variation>A</variation>
    <location>
        <position position="342"/>
    </location>
</feature>
<feature type="mutagenesis site" description="Increase in keratin-positive aggregates and keratin intermediate filament networks that are very thin and sparse with short filaments." evidence="31">
    <original>Q</original>
    <variation>A</variation>
    <location>
        <position position="346"/>
    </location>
</feature>
<feature type="mutagenesis site" description="No effect on interaction with KRT5 or keratin intermediate filament networks." evidence="31">
    <original>R</original>
    <variation>A</variation>
    <location>
        <position position="365"/>
    </location>
</feature>
<feature type="mutagenesis site" description="No effect on interaction with KRT5 or keratin intermediate filament networks." evidence="31">
    <original>Y</original>
    <variation>A</variation>
    <location>
        <position position="366"/>
    </location>
</feature>
<feature type="mutagenesis site" description="No effect on interaction with KRT5 or keratin intermediate filament networks." evidence="31">
    <original>Q</original>
    <variation>A</variation>
    <location>
        <position position="372"/>
    </location>
</feature>
<feature type="sequence conflict" description="In Ref. 1 and 2; AAB59562." evidence="49" ref="1 2">
    <original>G</original>
    <variation>A</variation>
    <location>
        <position position="26"/>
    </location>
</feature>
<feature type="sequence conflict" description="In Ref. 1 and 2; AAB59562." evidence="49" ref="1 2">
    <original>S</original>
    <variation>N</variation>
    <location>
        <position position="44"/>
    </location>
</feature>
<feature type="helix" evidence="52">
    <location>
        <begin position="329"/>
        <end position="417"/>
    </location>
</feature>
<comment type="function">
    <text evidence="11">The nonhelical tail domain is involved in promoting KRT5-KRT14 filaments to self-organize into large bundles and enhances the mechanical properties involved in resilience of keratin intermediate filaments in vitro.</text>
</comment>
<comment type="subunit">
    <text evidence="1 8 9 11 23 25 30">Heterotetramer of two type I and two type II keratins (By similarity). Forms a disulfide-linked heterodimer (via 2B domains) with KRT5 (via 2B domains) (PubMed:22705788, PubMed:24940650). Forms a heterodimer with KRT1; the interaction is more abundant in the absence of KRT5 (By similarity). Interacts with PLEC isoform 1C, when in a heterodimer with KRT5 (PubMed:24940650). Interacts with TRADD and with keratin filaments (PubMed:11684708). Associates with other type I keratins (PubMed:11724817). Interacts with EPPK1 (By similarity). Interacts with KLHL24 (PubMed:27798626). Interacts with PKP1 (via N-terminus) and PKP2 (PubMed:10852826).</text>
</comment>
<comment type="interaction">
    <interactant intactId="EBI-702178">
        <id>P02533</id>
    </interactant>
    <interactant intactId="EBI-11096309">
        <id>Q9NYB9-2</id>
        <label>ABI2</label>
    </interactant>
    <organismsDiffer>false</organismsDiffer>
    <experiments>3</experiments>
</comment>
<comment type="interaction">
    <interactant intactId="EBI-702178">
        <id>P02533</id>
    </interactant>
    <interactant intactId="EBI-742038">
        <id>Q9P2A4</id>
        <label>ABI3</label>
    </interactant>
    <organismsDiffer>false</organismsDiffer>
    <experiments>3</experiments>
</comment>
<comment type="interaction">
    <interactant intactId="EBI-702178">
        <id>P02533</id>
    </interactant>
    <interactant intactId="EBI-17286414">
        <id>A2BDD9</id>
        <label>AMOT</label>
    </interactant>
    <organismsDiffer>false</organismsDiffer>
    <experiments>3</experiments>
</comment>
<comment type="interaction">
    <interactant intactId="EBI-702178">
        <id>P02533</id>
    </interactant>
    <interactant intactId="EBI-10229433">
        <id>Q13515</id>
        <label>BFSP2</label>
    </interactant>
    <organismsDiffer>false</organismsDiffer>
    <experiments>3</experiments>
</comment>
<comment type="interaction">
    <interactant intactId="EBI-702178">
        <id>P02533</id>
    </interactant>
    <interactant intactId="EBI-1774260">
        <id>Q8WZ74</id>
        <label>CTTNBP2</label>
    </interactant>
    <organismsDiffer>false</organismsDiffer>
    <experiments>3</experiments>
</comment>
<comment type="interaction">
    <interactant intactId="EBI-702178">
        <id>P02533</id>
    </interactant>
    <interactant intactId="EBI-744099">
        <id>Q9H0I2</id>
        <label>ENKD1</label>
    </interactant>
    <organismsDiffer>false</organismsDiffer>
    <experiments>3</experiments>
</comment>
<comment type="interaction">
    <interactant intactId="EBI-702178">
        <id>P02533</id>
    </interactant>
    <interactant intactId="EBI-1052570">
        <id>O95995</id>
        <label>GAS8</label>
    </interactant>
    <organismsDiffer>false</organismsDiffer>
    <experiments>3</experiments>
</comment>
<comment type="interaction">
    <interactant intactId="EBI-702178">
        <id>P02533</id>
    </interactant>
    <interactant intactId="EBI-740220">
        <id>O14964</id>
        <label>HGS</label>
    </interactant>
    <organismsDiffer>false</organismsDiffer>
    <experiments>3</experiments>
</comment>
<comment type="interaction">
    <interactant intactId="EBI-702178">
        <id>P02533</id>
    </interactant>
    <interactant intactId="EBI-14069005">
        <id>Q9BVG8-5</id>
        <label>KIFC3</label>
    </interactant>
    <organismsDiffer>false</organismsDiffer>
    <experiments>3</experiments>
</comment>
<comment type="interaction">
    <interactant intactId="EBI-702178">
        <id>P02533</id>
    </interactant>
    <interactant intactId="EBI-298429">
        <id>P04264</id>
        <label>KRT1</label>
    </interactant>
    <organismsDiffer>false</organismsDiffer>
    <experiments>3</experiments>
</comment>
<comment type="interaction">
    <interactant intactId="EBI-702178">
        <id>P02533</id>
    </interactant>
    <interactant intactId="EBI-2430095">
        <id>P12035</id>
        <label>KRT3</label>
    </interactant>
    <organismsDiffer>false</organismsDiffer>
    <experiments>3</experiments>
</comment>
<comment type="interaction">
    <interactant intactId="EBI-702178">
        <id>P02533</id>
    </interactant>
    <interactant intactId="EBI-702187">
        <id>P13647</id>
        <label>KRT5</label>
    </interactant>
    <organismsDiffer>false</organismsDiffer>
    <experiments>8</experiments>
</comment>
<comment type="interaction">
    <interactant intactId="EBI-702178">
        <id>P02533</id>
    </interactant>
    <interactant intactId="EBI-2564105">
        <id>P48668</id>
        <label>KRT6C</label>
    </interactant>
    <organismsDiffer>false</organismsDiffer>
    <experiments>3</experiments>
</comment>
<comment type="interaction">
    <interactant intactId="EBI-702178">
        <id>P02533</id>
    </interactant>
    <interactant intactId="EBI-1221280">
        <id>Q14CN4</id>
        <label>KRT72</label>
    </interactant>
    <organismsDiffer>false</organismsDiffer>
    <experiments>3</experiments>
</comment>
<comment type="interaction">
    <interactant intactId="EBI-702178">
        <id>P02533</id>
    </interactant>
    <interactant intactId="EBI-1056564">
        <id>Q8N1N4</id>
        <label>KRT78</label>
    </interactant>
    <organismsDiffer>false</organismsDiffer>
    <experiments>3</experiments>
</comment>
<comment type="interaction">
    <interactant intactId="EBI-702178">
        <id>P02533</id>
    </interactant>
    <interactant intactId="EBI-2514135">
        <id>Q5XKE5</id>
        <label>KRT79</label>
    </interactant>
    <organismsDiffer>false</organismsDiffer>
    <experiments>3</experiments>
</comment>
<comment type="interaction">
    <interactant intactId="EBI-702178">
        <id>P02533</id>
    </interactant>
    <interactant intactId="EBI-11999246">
        <id>Q6KB66-2</id>
        <label>KRT80</label>
    </interactant>
    <organismsDiffer>false</organismsDiffer>
    <experiments>3</experiments>
</comment>
<comment type="interaction">
    <interactant intactId="EBI-702178">
        <id>P02533</id>
    </interactant>
    <interactant intactId="EBI-739648">
        <id>Q14533</id>
        <label>KRT81</label>
    </interactant>
    <organismsDiffer>false</organismsDiffer>
    <experiments>3</experiments>
</comment>
<comment type="interaction">
    <interactant intactId="EBI-702178">
        <id>P02533</id>
    </interactant>
    <interactant intactId="EBI-9996498">
        <id>O43790</id>
        <label>KRT86</label>
    </interactant>
    <organismsDiffer>false</organismsDiffer>
    <experiments>3</experiments>
</comment>
<comment type="interaction">
    <interactant intactId="EBI-702178">
        <id>P02533</id>
    </interactant>
    <interactant intactId="EBI-536879">
        <id>O43482</id>
        <label>OIP5</label>
    </interactant>
    <organismsDiffer>false</organismsDiffer>
    <experiments>3</experiments>
</comment>
<comment type="interaction">
    <interactant intactId="EBI-702178">
        <id>P02533</id>
    </interactant>
    <interactant intactId="EBI-9087684">
        <id>Q13835-2</id>
        <label>PKP1</label>
    </interactant>
    <organismsDiffer>false</organismsDiffer>
    <experiments>2</experiments>
</comment>
<comment type="interaction">
    <interactant intactId="EBI-702178">
        <id>P02533</id>
    </interactant>
    <interactant intactId="EBI-297903">
        <id>Q15149</id>
        <label>PLEC</label>
    </interactant>
    <organismsDiffer>false</organismsDiffer>
    <experiments>2</experiments>
</comment>
<comment type="interaction">
    <interactant intactId="EBI-702178">
        <id>P02533</id>
    </interactant>
    <interactant intactId="EBI-752074">
        <id>P41219</id>
        <label>PRPH</label>
    </interactant>
    <organismsDiffer>false</organismsDiffer>
    <experiments>3</experiments>
</comment>
<comment type="interaction">
    <interactant intactId="EBI-702178">
        <id>P02533</id>
    </interactant>
    <interactant intactId="EBI-11983583">
        <id>Q3MIT2</id>
        <label>PUS10</label>
    </interactant>
    <organismsDiffer>false</organismsDiffer>
    <experiments>3</experiments>
</comment>
<comment type="interaction">
    <interactant intactId="EBI-702178">
        <id>P02533</id>
    </interactant>
    <interactant intactId="EBI-727004">
        <id>O00560</id>
        <label>SDCBP</label>
    </interactant>
    <organismsDiffer>false</organismsDiffer>
    <experiments>3</experiments>
</comment>
<comment type="interaction">
    <interactant intactId="EBI-702178">
        <id>P02533</id>
    </interactant>
    <interactant intactId="EBI-455078">
        <id>Q969G3</id>
        <label>SMARCE1</label>
    </interactant>
    <organismsDiffer>false</organismsDiffer>
    <experiments>3</experiments>
</comment>
<comment type="interaction">
    <interactant intactId="EBI-702178">
        <id>P02533</id>
    </interactant>
    <interactant intactId="EBI-7353612">
        <id>P57075-2</id>
        <label>UBASH3A</label>
    </interactant>
    <organismsDiffer>false</organismsDiffer>
    <experiments>3</experiments>
</comment>
<comment type="interaction">
    <interactant intactId="EBI-702178">
        <id>P02533</id>
    </interactant>
    <interactant intactId="EBI-739895">
        <id>Q8N6Y0</id>
        <label>USHBP1</label>
    </interactant>
    <organismsDiffer>false</organismsDiffer>
    <experiments>3</experiments>
</comment>
<comment type="subcellular location">
    <subcellularLocation>
        <location evidence="11 31 32">Cytoplasm</location>
    </subcellularLocation>
    <subcellularLocation>
        <location evidence="11">Nucleus</location>
    </subcellularLocation>
    <text evidence="11">Expressed in both as a filamentous pattern.</text>
</comment>
<comment type="tissue specificity">
    <text evidence="29 42">Expressed in the corneal epithelium (at protein level) (PubMed:26758872). Detected in the basal layer, lowered within the more apically located layers specifically in the stratum spinosum, stratum granulosum but is not detected in stratum corneum. Strongly expressed in the outer root sheath of anagen follicles but not in the germinative matrix, inner root sheath or hair (PubMed:9457912). Found in keratinocytes surrounding the club hair during telogen (PubMed:9457912).</text>
</comment>
<comment type="PTM">
    <text evidence="1">A disulfide bond is formed between rather than within filaments and promotes the formation of a keratin filament cage around the nucleus.</text>
</comment>
<comment type="PTM">
    <text evidence="30">Ubiquitinated by the BCR(KLHL24) E3 ubiquitin ligase complex.</text>
</comment>
<comment type="disease" evidence="4 5 6 7 10 12 13 14 15 17 18 20 22 28 33 37 39 40 43 45 48">
    <disease id="DI-00462">
        <name>Epidermolysis bullosa simplex 1A, generalized severe</name>
        <acronym>EBS1A</acronym>
        <description>A form of epidermolysis bullosa simplex, a group of skin fragility disorders characterized by skin blistering due to cleavage within the basal layer of keratinocytes, and erosions caused by minor mechanical trauma. There is a broad spectrum of clinical severity ranging from minor blistering on the feet, to subtypes with extracutaneous involvement and a lethal outcome. EBS1A is an autosomal dominant form characterized by generalized intraepidermal skin blistering that begins and is very prominent at birth. EBS1A may be life-threatening in the first year of life. Tendency to blistering diminishes in adolescence.</description>
        <dbReference type="MIM" id="131760"/>
    </disease>
    <text>The disease is caused by variants affecting the gene represented in this entry.</text>
</comment>
<comment type="disease" evidence="6 12 13 14 15 17 18 22 28 34 37 41 44 45">
    <disease id="DI-00465">
        <name>Epidermolysis bullosa simplex 1C, localized</name>
        <acronym>EBS1C</acronym>
        <description>A form of epidermolysis bullosa simplex, a group of skin fragility disorders characterized by skin blistering due to cleavage within the basal layer of keratinocytes, and erosions caused by minor mechanical trauma. There is a broad spectrum of clinical severity ranging from minor blistering on the feet, to subtypes with extracutaneous involvement and a lethal outcome. EBS1C is an autosomal dominant form with intraepidermal blistering mainly restricted to hands and feet beginning in infancy. Nails may be thick and dystrophic.</description>
        <dbReference type="MIM" id="131800"/>
    </disease>
    <text>The disease is caused by variants affecting the gene represented in this entry.</text>
</comment>
<comment type="disease" evidence="6 7 10 17 21 35 38 45 46 48">
    <disease id="DI-00463">
        <name>Epidermolysis bullosa simplex 1B, generalized intermediate</name>
        <acronym>EBS1B</acronym>
        <description>A form of epidermolysis bullosa simplex, a group of skin fragility disorders characterized by skin blistering due to cleavage within the basal layer of keratinocytes, and erosions caused by minor mechanical trauma. There is a broad spectrum of clinical severity ranging from minor blistering on the feet, to subtypes with extracutaneous involvement and a lethal outcome. EBS1B is an autosomal dominant form characterized by generalized intraepidermal blistering beginning at birth. The tendency to blistering diminishes in adolescence, when it may become localized to hands and feet.</description>
        <dbReference type="MIM" id="131900"/>
    </disease>
    <text>The disease is caused by variants affecting the gene represented in this entry.</text>
</comment>
<comment type="disease" evidence="14 24 36">
    <disease id="DI-00461">
        <name>Epidermolysis bullosa simplex 1D, generalized, intermediate or severe, autosomal recessive</name>
        <acronym>EBS1D</acronym>
        <description>A form of epidermolysis bullosa simplex, a group of skin fragility disorders characterized by skin blistering due to cleavage within the basal layer of keratinocytes, and erosions caused by minor mechanical trauma. There is a broad spectrum of clinical severity ranging from minor blistering on the feet, to subtypes with extracutaneous involvement and a lethal outcome. EBS1D is an autosomal recessive form characterized by blistering beginning at birth or early childhood. In some patients hands and feet are primarily affected, and in others blistering anywhere on the body may occur. In some patients the condition improves with age.</description>
        <dbReference type="MIM" id="601001"/>
    </disease>
    <text>The disease is caused by variants affecting the gene represented in this entry.</text>
</comment>
<comment type="disease" evidence="19">
    <disease id="DI-00797">
        <name>Naegeli-Franceschetti-Jadassohn syndrome</name>
        <acronym>NFJS</acronym>
        <description>A rare autosomal dominant form of ectodermal dysplasia. The cardinal features are absence of dermatoglyphics (fingerprints), reticular cutaneous hyperpigmentation (starting at about the age of 2 years without a preceding inflammatory stage), palmoplantar keratoderma, hypohidrosis with diminished sweat gland function and discomfort provoked by heat, nail dystrophy, and tooth enamel defects.</description>
        <dbReference type="MIM" id="161000"/>
    </disease>
    <text>The disease is caused by variants affecting the gene represented in this entry.</text>
</comment>
<comment type="disease" evidence="19">
    <disease id="DI-00388">
        <name>Dermatopathia pigmentosa reticularis</name>
        <acronym>DPR</acronym>
        <description>A rare ectodermal dysplasia characterized by lifelong persistent reticulate hyperpigmentation, non-cicatricial alopecia, and nail dystrophy. Variable features include adermatoglyphia, hypohidrosis or hyperhidrosis, and palmoplantar hyperkeratosis.</description>
        <dbReference type="MIM" id="125595"/>
    </disease>
    <text>The disease is caused by variants affecting the gene represented in this entry.</text>
</comment>
<comment type="miscellaneous">
    <text>There are two types of cytoskeletal and microfibrillar keratin: I (acidic; 40-55 kDa) and II (neutral to basic; 56-70 kDa).</text>
</comment>
<comment type="similarity">
    <text evidence="2">Belongs to the intermediate filament family.</text>
</comment>
<protein>
    <recommendedName>
        <fullName>Keratin, type I cytoskeletal 14</fullName>
    </recommendedName>
    <alternativeName>
        <fullName>Cytokeratin-14</fullName>
        <shortName>CK-14</shortName>
    </alternativeName>
    <alternativeName>
        <fullName>Keratin-14</fullName>
        <shortName>K14</shortName>
    </alternativeName>
</protein>
<evidence type="ECO:0000250" key="1">
    <source>
        <dbReference type="UniProtKB" id="Q61781"/>
    </source>
</evidence>
<evidence type="ECO:0000255" key="2">
    <source>
        <dbReference type="PROSITE-ProRule" id="PRU01188"/>
    </source>
</evidence>
<evidence type="ECO:0000256" key="3">
    <source>
        <dbReference type="SAM" id="MobiDB-lite"/>
    </source>
</evidence>
<evidence type="ECO:0000269" key="4">
    <source>
    </source>
</evidence>
<evidence type="ECO:0000269" key="5">
    <source>
    </source>
</evidence>
<evidence type="ECO:0000269" key="6">
    <source>
    </source>
</evidence>
<evidence type="ECO:0000269" key="7">
    <source>
    </source>
</evidence>
<evidence type="ECO:0000269" key="8">
    <source>
    </source>
</evidence>
<evidence type="ECO:0000269" key="9">
    <source>
    </source>
</evidence>
<evidence type="ECO:0000269" key="10">
    <source>
    </source>
</evidence>
<evidence type="ECO:0000269" key="11">
    <source>
    </source>
</evidence>
<evidence type="ECO:0000269" key="12">
    <source>
    </source>
</evidence>
<evidence type="ECO:0000269" key="13">
    <source>
    </source>
</evidence>
<evidence type="ECO:0000269" key="14">
    <source>
    </source>
</evidence>
<evidence type="ECO:0000269" key="15">
    <source>
    </source>
</evidence>
<evidence type="ECO:0000269" key="16">
    <source>
    </source>
</evidence>
<evidence type="ECO:0000269" key="17">
    <source>
    </source>
</evidence>
<evidence type="ECO:0000269" key="18">
    <source>
    </source>
</evidence>
<evidence type="ECO:0000269" key="19">
    <source>
    </source>
</evidence>
<evidence type="ECO:0000269" key="20">
    <source>
    </source>
</evidence>
<evidence type="ECO:0000269" key="21">
    <source>
    </source>
</evidence>
<evidence type="ECO:0000269" key="22">
    <source>
    </source>
</evidence>
<evidence type="ECO:0000269" key="23">
    <source>
    </source>
</evidence>
<evidence type="ECO:0000269" key="24">
    <source>
    </source>
</evidence>
<evidence type="ECO:0000269" key="25">
    <source>
    </source>
</evidence>
<evidence type="ECO:0000269" key="26">
    <source>
    </source>
</evidence>
<evidence type="ECO:0000269" key="27">
    <source>
    </source>
</evidence>
<evidence type="ECO:0000269" key="28">
    <source>
    </source>
</evidence>
<evidence type="ECO:0000269" key="29">
    <source>
    </source>
</evidence>
<evidence type="ECO:0000269" key="30">
    <source>
    </source>
</evidence>
<evidence type="ECO:0000269" key="31">
    <source>
    </source>
</evidence>
<evidence type="ECO:0000269" key="32">
    <source>
    </source>
</evidence>
<evidence type="ECO:0000269" key="33">
    <source>
    </source>
</evidence>
<evidence type="ECO:0000269" key="34">
    <source>
    </source>
</evidence>
<evidence type="ECO:0000269" key="35">
    <source>
    </source>
</evidence>
<evidence type="ECO:0000269" key="36">
    <source>
    </source>
</evidence>
<evidence type="ECO:0000269" key="37">
    <source>
    </source>
</evidence>
<evidence type="ECO:0000269" key="38">
    <source>
    </source>
</evidence>
<evidence type="ECO:0000269" key="39">
    <source>
    </source>
</evidence>
<evidence type="ECO:0000269" key="40">
    <source>
    </source>
</evidence>
<evidence type="ECO:0000269" key="41">
    <source>
    </source>
</evidence>
<evidence type="ECO:0000269" key="42">
    <source>
    </source>
</evidence>
<evidence type="ECO:0000269" key="43">
    <source>
    </source>
</evidence>
<evidence type="ECO:0000269" key="44">
    <source>
    </source>
</evidence>
<evidence type="ECO:0000269" key="45">
    <source>
    </source>
</evidence>
<evidence type="ECO:0000269" key="46">
    <source ref="10"/>
</evidence>
<evidence type="ECO:0000269" key="47">
    <source ref="3"/>
</evidence>
<evidence type="ECO:0000269" key="48">
    <source ref="37"/>
</evidence>
<evidence type="ECO:0000305" key="49"/>
<evidence type="ECO:0000312" key="50">
    <source>
        <dbReference type="PDB" id="3TNU"/>
    </source>
</evidence>
<evidence type="ECO:0007744" key="51">
    <source>
        <dbReference type="PDB" id="6JFV"/>
    </source>
</evidence>
<evidence type="ECO:0007829" key="52">
    <source>
        <dbReference type="PDB" id="6JFV"/>
    </source>
</evidence>
<accession>P02533</accession>
<accession>Q14715</accession>
<accession>Q53XY3</accession>
<accession>Q9BUE3</accession>
<accession>Q9UBN2</accession>
<accession>Q9UBN3</accession>
<accession>Q9UCY4</accession>